<organism>
    <name type="scientific">Desulfotalea psychrophila (strain LSv54 / DSM 12343)</name>
    <dbReference type="NCBI Taxonomy" id="177439"/>
    <lineage>
        <taxon>Bacteria</taxon>
        <taxon>Pseudomonadati</taxon>
        <taxon>Thermodesulfobacteriota</taxon>
        <taxon>Desulfobulbia</taxon>
        <taxon>Desulfobulbales</taxon>
        <taxon>Desulfocapsaceae</taxon>
        <taxon>Desulfotalea</taxon>
    </lineage>
</organism>
<evidence type="ECO:0000255" key="1">
    <source>
        <dbReference type="HAMAP-Rule" id="MF_00151"/>
    </source>
</evidence>
<name>COAD_DESPS</name>
<gene>
    <name evidence="1" type="primary">coaD</name>
    <name type="ordered locus">DP2774</name>
</gene>
<protein>
    <recommendedName>
        <fullName evidence="1">Phosphopantetheine adenylyltransferase</fullName>
        <ecNumber evidence="1">2.7.7.3</ecNumber>
    </recommendedName>
    <alternativeName>
        <fullName evidence="1">Dephospho-CoA pyrophosphorylase</fullName>
    </alternativeName>
    <alternativeName>
        <fullName evidence="1">Pantetheine-phosphate adenylyltransferase</fullName>
        <shortName evidence="1">PPAT</shortName>
    </alternativeName>
</protein>
<comment type="function">
    <text evidence="1">Reversibly transfers an adenylyl group from ATP to 4'-phosphopantetheine, yielding dephospho-CoA (dPCoA) and pyrophosphate.</text>
</comment>
<comment type="catalytic activity">
    <reaction evidence="1">
        <text>(R)-4'-phosphopantetheine + ATP + H(+) = 3'-dephospho-CoA + diphosphate</text>
        <dbReference type="Rhea" id="RHEA:19801"/>
        <dbReference type="ChEBI" id="CHEBI:15378"/>
        <dbReference type="ChEBI" id="CHEBI:30616"/>
        <dbReference type="ChEBI" id="CHEBI:33019"/>
        <dbReference type="ChEBI" id="CHEBI:57328"/>
        <dbReference type="ChEBI" id="CHEBI:61723"/>
        <dbReference type="EC" id="2.7.7.3"/>
    </reaction>
</comment>
<comment type="cofactor">
    <cofactor evidence="1">
        <name>Mg(2+)</name>
        <dbReference type="ChEBI" id="CHEBI:18420"/>
    </cofactor>
</comment>
<comment type="pathway">
    <text evidence="1">Cofactor biosynthesis; coenzyme A biosynthesis; CoA from (R)-pantothenate: step 4/5.</text>
</comment>
<comment type="subunit">
    <text evidence="1">Homohexamer.</text>
</comment>
<comment type="subcellular location">
    <subcellularLocation>
        <location evidence="1">Cytoplasm</location>
    </subcellularLocation>
</comment>
<comment type="similarity">
    <text evidence="1">Belongs to the bacterial CoaD family.</text>
</comment>
<dbReference type="EC" id="2.7.7.3" evidence="1"/>
<dbReference type="EMBL" id="CR522870">
    <property type="protein sequence ID" value="CAG37503.1"/>
    <property type="molecule type" value="Genomic_DNA"/>
</dbReference>
<dbReference type="RefSeq" id="WP_011190015.1">
    <property type="nucleotide sequence ID" value="NC_006138.1"/>
</dbReference>
<dbReference type="SMR" id="Q6AJH7"/>
<dbReference type="STRING" id="177439.DP2774"/>
<dbReference type="KEGG" id="dps:DP2774"/>
<dbReference type="eggNOG" id="COG0669">
    <property type="taxonomic scope" value="Bacteria"/>
</dbReference>
<dbReference type="HOGENOM" id="CLU_100149_0_1_7"/>
<dbReference type="OrthoDB" id="9806661at2"/>
<dbReference type="UniPathway" id="UPA00241">
    <property type="reaction ID" value="UER00355"/>
</dbReference>
<dbReference type="Proteomes" id="UP000000602">
    <property type="component" value="Chromosome"/>
</dbReference>
<dbReference type="GO" id="GO:0005737">
    <property type="term" value="C:cytoplasm"/>
    <property type="evidence" value="ECO:0007669"/>
    <property type="project" value="UniProtKB-SubCell"/>
</dbReference>
<dbReference type="GO" id="GO:0005524">
    <property type="term" value="F:ATP binding"/>
    <property type="evidence" value="ECO:0007669"/>
    <property type="project" value="UniProtKB-KW"/>
</dbReference>
<dbReference type="GO" id="GO:0004595">
    <property type="term" value="F:pantetheine-phosphate adenylyltransferase activity"/>
    <property type="evidence" value="ECO:0007669"/>
    <property type="project" value="UniProtKB-UniRule"/>
</dbReference>
<dbReference type="GO" id="GO:0015937">
    <property type="term" value="P:coenzyme A biosynthetic process"/>
    <property type="evidence" value="ECO:0007669"/>
    <property type="project" value="UniProtKB-UniRule"/>
</dbReference>
<dbReference type="CDD" id="cd02163">
    <property type="entry name" value="PPAT"/>
    <property type="match status" value="1"/>
</dbReference>
<dbReference type="Gene3D" id="3.40.50.620">
    <property type="entry name" value="HUPs"/>
    <property type="match status" value="1"/>
</dbReference>
<dbReference type="HAMAP" id="MF_00151">
    <property type="entry name" value="PPAT_bact"/>
    <property type="match status" value="1"/>
</dbReference>
<dbReference type="InterPro" id="IPR004821">
    <property type="entry name" value="Cyt_trans-like"/>
</dbReference>
<dbReference type="InterPro" id="IPR001980">
    <property type="entry name" value="PPAT"/>
</dbReference>
<dbReference type="InterPro" id="IPR014729">
    <property type="entry name" value="Rossmann-like_a/b/a_fold"/>
</dbReference>
<dbReference type="NCBIfam" id="TIGR01510">
    <property type="entry name" value="coaD_prev_kdtB"/>
    <property type="match status" value="1"/>
</dbReference>
<dbReference type="NCBIfam" id="TIGR00125">
    <property type="entry name" value="cyt_tran_rel"/>
    <property type="match status" value="1"/>
</dbReference>
<dbReference type="PANTHER" id="PTHR21342">
    <property type="entry name" value="PHOSPHOPANTETHEINE ADENYLYLTRANSFERASE"/>
    <property type="match status" value="1"/>
</dbReference>
<dbReference type="PANTHER" id="PTHR21342:SF1">
    <property type="entry name" value="PHOSPHOPANTETHEINE ADENYLYLTRANSFERASE"/>
    <property type="match status" value="1"/>
</dbReference>
<dbReference type="Pfam" id="PF01467">
    <property type="entry name" value="CTP_transf_like"/>
    <property type="match status" value="1"/>
</dbReference>
<dbReference type="PRINTS" id="PR01020">
    <property type="entry name" value="LPSBIOSNTHSS"/>
</dbReference>
<dbReference type="SUPFAM" id="SSF52374">
    <property type="entry name" value="Nucleotidylyl transferase"/>
    <property type="match status" value="1"/>
</dbReference>
<keyword id="KW-0067">ATP-binding</keyword>
<keyword id="KW-0173">Coenzyme A biosynthesis</keyword>
<keyword id="KW-0963">Cytoplasm</keyword>
<keyword id="KW-0460">Magnesium</keyword>
<keyword id="KW-0547">Nucleotide-binding</keyword>
<keyword id="KW-0548">Nucleotidyltransferase</keyword>
<keyword id="KW-1185">Reference proteome</keyword>
<keyword id="KW-0808">Transferase</keyword>
<accession>Q6AJH7</accession>
<proteinExistence type="inferred from homology"/>
<feature type="chain" id="PRO_0000156202" description="Phosphopantetheine adenylyltransferase">
    <location>
        <begin position="1"/>
        <end position="170"/>
    </location>
</feature>
<feature type="binding site" evidence="1">
    <location>
        <begin position="18"/>
        <end position="19"/>
    </location>
    <ligand>
        <name>ATP</name>
        <dbReference type="ChEBI" id="CHEBI:30616"/>
    </ligand>
</feature>
<feature type="binding site" evidence="1">
    <location>
        <position position="18"/>
    </location>
    <ligand>
        <name>substrate</name>
    </ligand>
</feature>
<feature type="binding site" evidence="1">
    <location>
        <position position="26"/>
    </location>
    <ligand>
        <name>ATP</name>
        <dbReference type="ChEBI" id="CHEBI:30616"/>
    </ligand>
</feature>
<feature type="binding site" evidence="1">
    <location>
        <position position="50"/>
    </location>
    <ligand>
        <name>substrate</name>
    </ligand>
</feature>
<feature type="binding site" evidence="1">
    <location>
        <position position="84"/>
    </location>
    <ligand>
        <name>substrate</name>
    </ligand>
</feature>
<feature type="binding site" evidence="1">
    <location>
        <position position="98"/>
    </location>
    <ligand>
        <name>substrate</name>
    </ligand>
</feature>
<feature type="binding site" evidence="1">
    <location>
        <begin position="99"/>
        <end position="101"/>
    </location>
    <ligand>
        <name>ATP</name>
        <dbReference type="ChEBI" id="CHEBI:30616"/>
    </ligand>
</feature>
<feature type="binding site" evidence="1">
    <location>
        <position position="109"/>
    </location>
    <ligand>
        <name>ATP</name>
        <dbReference type="ChEBI" id="CHEBI:30616"/>
    </ligand>
</feature>
<feature type="binding site" evidence="1">
    <location>
        <begin position="134"/>
        <end position="140"/>
    </location>
    <ligand>
        <name>ATP</name>
        <dbReference type="ChEBI" id="CHEBI:30616"/>
    </ligand>
</feature>
<feature type="site" description="Transition state stabilizer" evidence="1">
    <location>
        <position position="26"/>
    </location>
</feature>
<reference key="1">
    <citation type="journal article" date="2004" name="Environ. Microbiol.">
        <title>The genome of Desulfotalea psychrophila, a sulfate-reducing bacterium from permanently cold Arctic sediments.</title>
        <authorList>
            <person name="Rabus R."/>
            <person name="Ruepp A."/>
            <person name="Frickey T."/>
            <person name="Rattei T."/>
            <person name="Fartmann B."/>
            <person name="Stark M."/>
            <person name="Bauer M."/>
            <person name="Zibat A."/>
            <person name="Lombardot T."/>
            <person name="Becker I."/>
            <person name="Amann J."/>
            <person name="Gellner K."/>
            <person name="Teeling H."/>
            <person name="Leuschner W.D."/>
            <person name="Gloeckner F.-O."/>
            <person name="Lupas A.N."/>
            <person name="Amann R."/>
            <person name="Klenk H.-P."/>
        </authorList>
    </citation>
    <scope>NUCLEOTIDE SEQUENCE [LARGE SCALE GENOMIC DNA]</scope>
    <source>
        <strain>DSM 12343 / LSv54</strain>
    </source>
</reference>
<sequence>MSLHTENSQPSIGVYPGTFDPITNGHIDIIERALALFDTVIVAIAVNGQKQPLFSGEERKEMIEKCFEKEKGRIIVKIVPSGLLVNFAVEQGARAIIRGLRAVSDFDYEFQLALMNRKLVREVESIFLMTAFRWIYISSSLIKDVSKNGGDISDLVPKHVERLLEEKYRP</sequence>